<name>RS14_ECO8A</name>
<proteinExistence type="inferred from homology"/>
<reference key="1">
    <citation type="journal article" date="2009" name="PLoS Genet.">
        <title>Organised genome dynamics in the Escherichia coli species results in highly diverse adaptive paths.</title>
        <authorList>
            <person name="Touchon M."/>
            <person name="Hoede C."/>
            <person name="Tenaillon O."/>
            <person name="Barbe V."/>
            <person name="Baeriswyl S."/>
            <person name="Bidet P."/>
            <person name="Bingen E."/>
            <person name="Bonacorsi S."/>
            <person name="Bouchier C."/>
            <person name="Bouvet O."/>
            <person name="Calteau A."/>
            <person name="Chiapello H."/>
            <person name="Clermont O."/>
            <person name="Cruveiller S."/>
            <person name="Danchin A."/>
            <person name="Diard M."/>
            <person name="Dossat C."/>
            <person name="Karoui M.E."/>
            <person name="Frapy E."/>
            <person name="Garry L."/>
            <person name="Ghigo J.M."/>
            <person name="Gilles A.M."/>
            <person name="Johnson J."/>
            <person name="Le Bouguenec C."/>
            <person name="Lescat M."/>
            <person name="Mangenot S."/>
            <person name="Martinez-Jehanne V."/>
            <person name="Matic I."/>
            <person name="Nassif X."/>
            <person name="Oztas S."/>
            <person name="Petit M.A."/>
            <person name="Pichon C."/>
            <person name="Rouy Z."/>
            <person name="Ruf C.S."/>
            <person name="Schneider D."/>
            <person name="Tourret J."/>
            <person name="Vacherie B."/>
            <person name="Vallenet D."/>
            <person name="Medigue C."/>
            <person name="Rocha E.P.C."/>
            <person name="Denamur E."/>
        </authorList>
    </citation>
    <scope>NUCLEOTIDE SEQUENCE [LARGE SCALE GENOMIC DNA]</scope>
    <source>
        <strain>IAI1</strain>
    </source>
</reference>
<protein>
    <recommendedName>
        <fullName evidence="1">Small ribosomal subunit protein uS14</fullName>
    </recommendedName>
    <alternativeName>
        <fullName evidence="2">30S ribosomal protein S14</fullName>
    </alternativeName>
</protein>
<comment type="function">
    <text evidence="1">Binds 16S rRNA, required for the assembly of 30S particles and may also be responsible for determining the conformation of the 16S rRNA at the A site.</text>
</comment>
<comment type="subunit">
    <text evidence="1">Part of the 30S ribosomal subunit. Contacts proteins S3 and S10.</text>
</comment>
<comment type="similarity">
    <text evidence="1">Belongs to the universal ribosomal protein uS14 family.</text>
</comment>
<dbReference type="EMBL" id="CU928160">
    <property type="protein sequence ID" value="CAR00258.1"/>
    <property type="molecule type" value="Genomic_DNA"/>
</dbReference>
<dbReference type="RefSeq" id="WP_001118931.1">
    <property type="nucleotide sequence ID" value="NC_011741.1"/>
</dbReference>
<dbReference type="EMDB" id="EMD-41049"/>
<dbReference type="EMDB" id="EMD-41050"/>
<dbReference type="SMR" id="B7M1M1"/>
<dbReference type="KEGG" id="ecr:ECIAI1_3456"/>
<dbReference type="HOGENOM" id="CLU_139869_0_1_6"/>
<dbReference type="GO" id="GO:0005737">
    <property type="term" value="C:cytoplasm"/>
    <property type="evidence" value="ECO:0007669"/>
    <property type="project" value="UniProtKB-ARBA"/>
</dbReference>
<dbReference type="GO" id="GO:0015935">
    <property type="term" value="C:small ribosomal subunit"/>
    <property type="evidence" value="ECO:0007669"/>
    <property type="project" value="TreeGrafter"/>
</dbReference>
<dbReference type="GO" id="GO:0019843">
    <property type="term" value="F:rRNA binding"/>
    <property type="evidence" value="ECO:0007669"/>
    <property type="project" value="UniProtKB-UniRule"/>
</dbReference>
<dbReference type="GO" id="GO:0003735">
    <property type="term" value="F:structural constituent of ribosome"/>
    <property type="evidence" value="ECO:0007669"/>
    <property type="project" value="InterPro"/>
</dbReference>
<dbReference type="GO" id="GO:0006412">
    <property type="term" value="P:translation"/>
    <property type="evidence" value="ECO:0007669"/>
    <property type="project" value="UniProtKB-UniRule"/>
</dbReference>
<dbReference type="FunFam" id="1.10.287.1480:FF:000001">
    <property type="entry name" value="30S ribosomal protein S14"/>
    <property type="match status" value="1"/>
</dbReference>
<dbReference type="Gene3D" id="1.10.287.1480">
    <property type="match status" value="1"/>
</dbReference>
<dbReference type="HAMAP" id="MF_00537">
    <property type="entry name" value="Ribosomal_uS14_1"/>
    <property type="match status" value="1"/>
</dbReference>
<dbReference type="InterPro" id="IPR001209">
    <property type="entry name" value="Ribosomal_uS14"/>
</dbReference>
<dbReference type="InterPro" id="IPR023036">
    <property type="entry name" value="Ribosomal_uS14_bac/plastid"/>
</dbReference>
<dbReference type="InterPro" id="IPR018271">
    <property type="entry name" value="Ribosomal_uS14_CS"/>
</dbReference>
<dbReference type="NCBIfam" id="NF006477">
    <property type="entry name" value="PRK08881.1"/>
    <property type="match status" value="1"/>
</dbReference>
<dbReference type="PANTHER" id="PTHR19836">
    <property type="entry name" value="30S RIBOSOMAL PROTEIN S14"/>
    <property type="match status" value="1"/>
</dbReference>
<dbReference type="PANTHER" id="PTHR19836:SF19">
    <property type="entry name" value="SMALL RIBOSOMAL SUBUNIT PROTEIN US14M"/>
    <property type="match status" value="1"/>
</dbReference>
<dbReference type="Pfam" id="PF00253">
    <property type="entry name" value="Ribosomal_S14"/>
    <property type="match status" value="1"/>
</dbReference>
<dbReference type="SUPFAM" id="SSF57716">
    <property type="entry name" value="Glucocorticoid receptor-like (DNA-binding domain)"/>
    <property type="match status" value="1"/>
</dbReference>
<dbReference type="PROSITE" id="PS00527">
    <property type="entry name" value="RIBOSOMAL_S14"/>
    <property type="match status" value="1"/>
</dbReference>
<evidence type="ECO:0000255" key="1">
    <source>
        <dbReference type="HAMAP-Rule" id="MF_00537"/>
    </source>
</evidence>
<evidence type="ECO:0000305" key="2"/>
<organism>
    <name type="scientific">Escherichia coli O8 (strain IAI1)</name>
    <dbReference type="NCBI Taxonomy" id="585034"/>
    <lineage>
        <taxon>Bacteria</taxon>
        <taxon>Pseudomonadati</taxon>
        <taxon>Pseudomonadota</taxon>
        <taxon>Gammaproteobacteria</taxon>
        <taxon>Enterobacterales</taxon>
        <taxon>Enterobacteriaceae</taxon>
        <taxon>Escherichia</taxon>
    </lineage>
</organism>
<keyword id="KW-0687">Ribonucleoprotein</keyword>
<keyword id="KW-0689">Ribosomal protein</keyword>
<keyword id="KW-0694">RNA-binding</keyword>
<keyword id="KW-0699">rRNA-binding</keyword>
<sequence length="101" mass="11595">MAKQSMKAREVKRVALADKYFAKRAELKAIISDVNASDEERWNAVLKLQTLPRDSSPSRQRNRCRQTGRPHGFLRKFGLSRIKVREAAMRGEIPGLKKASW</sequence>
<gene>
    <name evidence="1" type="primary">rpsN</name>
    <name type="ordered locus">ECIAI1_3456</name>
</gene>
<feature type="chain" id="PRO_1000128385" description="Small ribosomal subunit protein uS14">
    <location>
        <begin position="1"/>
        <end position="101"/>
    </location>
</feature>
<accession>B7M1M1</accession>